<sequence>MPRLSVQEIDQALKGLRNWRFENGELVKEFKFADFDSSIRFLNMVQPVADSLDHHPDLCVYYNRVIVHLTTHDEGGVTDLDLKLAQKLDELEKMVH</sequence>
<dbReference type="EC" id="4.2.1.96" evidence="1"/>
<dbReference type="EMBL" id="CP000682">
    <property type="protein sequence ID" value="ABP94875.1"/>
    <property type="molecule type" value="Genomic_DNA"/>
</dbReference>
<dbReference type="RefSeq" id="WP_012020662.1">
    <property type="nucleotide sequence ID" value="NC_009440.1"/>
</dbReference>
<dbReference type="SMR" id="A4YEM3"/>
<dbReference type="STRING" id="399549.Msed_0700"/>
<dbReference type="GeneID" id="91755153"/>
<dbReference type="KEGG" id="mse:Msed_0700"/>
<dbReference type="eggNOG" id="arCOG02939">
    <property type="taxonomic scope" value="Archaea"/>
</dbReference>
<dbReference type="HOGENOM" id="CLU_081974_4_0_2"/>
<dbReference type="Proteomes" id="UP000000242">
    <property type="component" value="Chromosome"/>
</dbReference>
<dbReference type="GO" id="GO:0008124">
    <property type="term" value="F:4-alpha-hydroxytetrahydrobiopterin dehydratase activity"/>
    <property type="evidence" value="ECO:0007669"/>
    <property type="project" value="UniProtKB-UniRule"/>
</dbReference>
<dbReference type="GO" id="GO:0006729">
    <property type="term" value="P:tetrahydrobiopterin biosynthetic process"/>
    <property type="evidence" value="ECO:0007669"/>
    <property type="project" value="InterPro"/>
</dbReference>
<dbReference type="CDD" id="cd00488">
    <property type="entry name" value="PCD_DCoH"/>
    <property type="match status" value="1"/>
</dbReference>
<dbReference type="Gene3D" id="3.30.1360.20">
    <property type="entry name" value="Transcriptional coactivator/pterin dehydratase"/>
    <property type="match status" value="1"/>
</dbReference>
<dbReference type="HAMAP" id="MF_00434">
    <property type="entry name" value="Pterin_4_alpha"/>
    <property type="match status" value="1"/>
</dbReference>
<dbReference type="InterPro" id="IPR036428">
    <property type="entry name" value="PCD_sf"/>
</dbReference>
<dbReference type="InterPro" id="IPR001533">
    <property type="entry name" value="Pterin_deHydtase"/>
</dbReference>
<dbReference type="NCBIfam" id="NF002017">
    <property type="entry name" value="PRK00823.1-2"/>
    <property type="match status" value="1"/>
</dbReference>
<dbReference type="PANTHER" id="PTHR12599">
    <property type="entry name" value="PTERIN-4-ALPHA-CARBINOLAMINE DEHYDRATASE"/>
    <property type="match status" value="1"/>
</dbReference>
<dbReference type="PANTHER" id="PTHR12599:SF0">
    <property type="entry name" value="PTERIN-4-ALPHA-CARBINOLAMINE DEHYDRATASE"/>
    <property type="match status" value="1"/>
</dbReference>
<dbReference type="Pfam" id="PF01329">
    <property type="entry name" value="Pterin_4a"/>
    <property type="match status" value="1"/>
</dbReference>
<dbReference type="SUPFAM" id="SSF55248">
    <property type="entry name" value="PCD-like"/>
    <property type="match status" value="1"/>
</dbReference>
<feature type="chain" id="PRO_1000072315" description="Putative pterin-4-alpha-carbinolamine dehydratase">
    <location>
        <begin position="1"/>
        <end position="96"/>
    </location>
</feature>
<comment type="catalytic activity">
    <reaction evidence="1">
        <text>(4aS,6R)-4a-hydroxy-L-erythro-5,6,7,8-tetrahydrobiopterin = (6R)-L-erythro-6,7-dihydrobiopterin + H2O</text>
        <dbReference type="Rhea" id="RHEA:11920"/>
        <dbReference type="ChEBI" id="CHEBI:15377"/>
        <dbReference type="ChEBI" id="CHEBI:15642"/>
        <dbReference type="ChEBI" id="CHEBI:43120"/>
        <dbReference type="EC" id="4.2.1.96"/>
    </reaction>
</comment>
<comment type="similarity">
    <text evidence="1">Belongs to the pterin-4-alpha-carbinolamine dehydratase family.</text>
</comment>
<proteinExistence type="inferred from homology"/>
<evidence type="ECO:0000255" key="1">
    <source>
        <dbReference type="HAMAP-Rule" id="MF_00434"/>
    </source>
</evidence>
<name>PHS_METS5</name>
<protein>
    <recommendedName>
        <fullName evidence="1">Putative pterin-4-alpha-carbinolamine dehydratase</fullName>
        <shortName evidence="1">PHS</shortName>
        <ecNumber evidence="1">4.2.1.96</ecNumber>
    </recommendedName>
    <alternativeName>
        <fullName evidence="1">4-alpha-hydroxy-tetrahydropterin dehydratase</fullName>
    </alternativeName>
    <alternativeName>
        <fullName evidence="1">Pterin carbinolamine dehydratase</fullName>
        <shortName evidence="1">PCD</shortName>
    </alternativeName>
</protein>
<accession>A4YEM3</accession>
<keyword id="KW-0456">Lyase</keyword>
<keyword id="KW-1185">Reference proteome</keyword>
<organism>
    <name type="scientific">Metallosphaera sedula (strain ATCC 51363 / DSM 5348 / JCM 9185 / NBRC 15509 / TH2)</name>
    <dbReference type="NCBI Taxonomy" id="399549"/>
    <lineage>
        <taxon>Archaea</taxon>
        <taxon>Thermoproteota</taxon>
        <taxon>Thermoprotei</taxon>
        <taxon>Sulfolobales</taxon>
        <taxon>Sulfolobaceae</taxon>
        <taxon>Metallosphaera</taxon>
    </lineage>
</organism>
<gene>
    <name type="ordered locus">Msed_0700</name>
</gene>
<reference key="1">
    <citation type="journal article" date="2008" name="Appl. Environ. Microbiol.">
        <title>The genome sequence of the metal-mobilizing, extremely thermoacidophilic archaeon Metallosphaera sedula provides insights into bioleaching-associated metabolism.</title>
        <authorList>
            <person name="Auernik K.S."/>
            <person name="Maezato Y."/>
            <person name="Blum P.H."/>
            <person name="Kelly R.M."/>
        </authorList>
    </citation>
    <scope>NUCLEOTIDE SEQUENCE [LARGE SCALE GENOMIC DNA]</scope>
    <source>
        <strain>ATCC 51363 / DSM 5348 / JCM 9185 / NBRC 15509 / TH2</strain>
    </source>
</reference>